<proteinExistence type="inferred from homology"/>
<reference key="1">
    <citation type="submission" date="2006-08" db="EMBL/GenBank/DDBJ databases">
        <title>Complete sequence of Shewanella sp. MR-4.</title>
        <authorList>
            <consortium name="US DOE Joint Genome Institute"/>
            <person name="Copeland A."/>
            <person name="Lucas S."/>
            <person name="Lapidus A."/>
            <person name="Barry K."/>
            <person name="Detter J.C."/>
            <person name="Glavina del Rio T."/>
            <person name="Hammon N."/>
            <person name="Israni S."/>
            <person name="Dalin E."/>
            <person name="Tice H."/>
            <person name="Pitluck S."/>
            <person name="Kiss H."/>
            <person name="Brettin T."/>
            <person name="Bruce D."/>
            <person name="Han C."/>
            <person name="Tapia R."/>
            <person name="Gilna P."/>
            <person name="Schmutz J."/>
            <person name="Larimer F."/>
            <person name="Land M."/>
            <person name="Hauser L."/>
            <person name="Kyrpides N."/>
            <person name="Mikhailova N."/>
            <person name="Nealson K."/>
            <person name="Konstantinidis K."/>
            <person name="Klappenbach J."/>
            <person name="Tiedje J."/>
            <person name="Richardson P."/>
        </authorList>
    </citation>
    <scope>NUCLEOTIDE SEQUENCE [LARGE SCALE GENOMIC DNA]</scope>
    <source>
        <strain>MR-4</strain>
    </source>
</reference>
<sequence length="484" mass="54478">MKFKQDFFTQLPEFYSQVYPQGISNPHWLAWSEDAAKLIDLQQPTDALLQGLSGNAAVEGASYYAQVYSGHQFGGYTPRLGDGRSIILGEALGPQGAWDVALKGGGPTPYSRHGDGRAVMRSAVREFLVSEALHHLGVPTTRALAVIGSDMPVWRESQETAAITVRLARSHIRFGHFEFFCHSERGQADKLTQLLNFTLKQHYPNLSCDLAGYKAWFLQVVQDTAKLIAHWQAIGFAHGVMNTDNMSILGDSFDFGPFAFLDTFQEDFICNHSDPEGRYAFGQQPGIGLWNLQRLAQALTPVIPSDDLIAALNQYQHALVQHYLMLMRVKLGLTERADSTAEQDQQDLELIGRFTVLMEKNQLDYSNTWRRFGQLDPSSAHSSLRDDFIDLNEFDAWYQAYQARLGKVTDIEAWQQARNSVNPKYILRNYLAQEAIIAVEEGNLAPLERLHQVLRQPFAEQVEHEDLAKRPPDWGQGLIMSCSS</sequence>
<protein>
    <recommendedName>
        <fullName evidence="1">Protein nucleotidyltransferase YdiU</fullName>
        <ecNumber evidence="1">2.7.7.-</ecNumber>
    </recommendedName>
    <alternativeName>
        <fullName evidence="1">Protein adenylyltransferase YdiU</fullName>
        <ecNumber evidence="1">2.7.7.108</ecNumber>
    </alternativeName>
    <alternativeName>
        <fullName evidence="1">Protein uridylyltransferase YdiU</fullName>
        <ecNumber evidence="1">2.7.7.-</ecNumber>
    </alternativeName>
</protein>
<evidence type="ECO:0000255" key="1">
    <source>
        <dbReference type="HAMAP-Rule" id="MF_00692"/>
    </source>
</evidence>
<organism>
    <name type="scientific">Shewanella sp. (strain MR-4)</name>
    <dbReference type="NCBI Taxonomy" id="60480"/>
    <lineage>
        <taxon>Bacteria</taxon>
        <taxon>Pseudomonadati</taxon>
        <taxon>Pseudomonadota</taxon>
        <taxon>Gammaproteobacteria</taxon>
        <taxon>Alteromonadales</taxon>
        <taxon>Shewanellaceae</taxon>
        <taxon>Shewanella</taxon>
    </lineage>
</organism>
<feature type="chain" id="PRO_0000271867" description="Protein nucleotidyltransferase YdiU">
    <location>
        <begin position="1"/>
        <end position="484"/>
    </location>
</feature>
<feature type="active site" description="Proton acceptor" evidence="1">
    <location>
        <position position="244"/>
    </location>
</feature>
<feature type="binding site" evidence="1">
    <location>
        <position position="81"/>
    </location>
    <ligand>
        <name>ATP</name>
        <dbReference type="ChEBI" id="CHEBI:30616"/>
    </ligand>
</feature>
<feature type="binding site" evidence="1">
    <location>
        <position position="83"/>
    </location>
    <ligand>
        <name>ATP</name>
        <dbReference type="ChEBI" id="CHEBI:30616"/>
    </ligand>
</feature>
<feature type="binding site" evidence="1">
    <location>
        <position position="84"/>
    </location>
    <ligand>
        <name>ATP</name>
        <dbReference type="ChEBI" id="CHEBI:30616"/>
    </ligand>
</feature>
<feature type="binding site" evidence="1">
    <location>
        <position position="103"/>
    </location>
    <ligand>
        <name>ATP</name>
        <dbReference type="ChEBI" id="CHEBI:30616"/>
    </ligand>
</feature>
<feature type="binding site" evidence="1">
    <location>
        <position position="115"/>
    </location>
    <ligand>
        <name>ATP</name>
        <dbReference type="ChEBI" id="CHEBI:30616"/>
    </ligand>
</feature>
<feature type="binding site" evidence="1">
    <location>
        <position position="116"/>
    </location>
    <ligand>
        <name>ATP</name>
        <dbReference type="ChEBI" id="CHEBI:30616"/>
    </ligand>
</feature>
<feature type="binding site" evidence="1">
    <location>
        <position position="166"/>
    </location>
    <ligand>
        <name>ATP</name>
        <dbReference type="ChEBI" id="CHEBI:30616"/>
    </ligand>
</feature>
<feature type="binding site" evidence="1">
    <location>
        <position position="173"/>
    </location>
    <ligand>
        <name>ATP</name>
        <dbReference type="ChEBI" id="CHEBI:30616"/>
    </ligand>
</feature>
<feature type="binding site" evidence="1">
    <location>
        <position position="245"/>
    </location>
    <ligand>
        <name>Mg(2+)</name>
        <dbReference type="ChEBI" id="CHEBI:18420"/>
    </ligand>
</feature>
<feature type="binding site" evidence="1">
    <location>
        <position position="254"/>
    </location>
    <ligand>
        <name>ATP</name>
        <dbReference type="ChEBI" id="CHEBI:30616"/>
    </ligand>
</feature>
<feature type="binding site" evidence="1">
    <location>
        <position position="254"/>
    </location>
    <ligand>
        <name>Mg(2+)</name>
        <dbReference type="ChEBI" id="CHEBI:18420"/>
    </ligand>
</feature>
<name>SELO_SHESM</name>
<dbReference type="EC" id="2.7.7.-" evidence="1"/>
<dbReference type="EC" id="2.7.7.108" evidence="1"/>
<dbReference type="EMBL" id="CP000446">
    <property type="protein sequence ID" value="ABI40709.1"/>
    <property type="molecule type" value="Genomic_DNA"/>
</dbReference>
<dbReference type="RefSeq" id="WP_011624370.1">
    <property type="nucleotide sequence ID" value="NC_008321.1"/>
</dbReference>
<dbReference type="SMR" id="Q0HE08"/>
<dbReference type="KEGG" id="she:Shewmr4_3645"/>
<dbReference type="HOGENOM" id="CLU_010245_4_1_6"/>
<dbReference type="GO" id="GO:0070733">
    <property type="term" value="F:AMPylase activity"/>
    <property type="evidence" value="ECO:0007669"/>
    <property type="project" value="TreeGrafter"/>
</dbReference>
<dbReference type="GO" id="GO:0005524">
    <property type="term" value="F:ATP binding"/>
    <property type="evidence" value="ECO:0007669"/>
    <property type="project" value="UniProtKB-UniRule"/>
</dbReference>
<dbReference type="GO" id="GO:0000287">
    <property type="term" value="F:magnesium ion binding"/>
    <property type="evidence" value="ECO:0007669"/>
    <property type="project" value="UniProtKB-UniRule"/>
</dbReference>
<dbReference type="HAMAP" id="MF_00692">
    <property type="entry name" value="YdiU_SelO"/>
    <property type="match status" value="1"/>
</dbReference>
<dbReference type="InterPro" id="IPR003846">
    <property type="entry name" value="SelO"/>
</dbReference>
<dbReference type="NCBIfam" id="NF000658">
    <property type="entry name" value="PRK00029.1"/>
    <property type="match status" value="1"/>
</dbReference>
<dbReference type="PANTHER" id="PTHR32057">
    <property type="entry name" value="PROTEIN ADENYLYLTRANSFERASE SELO, MITOCHONDRIAL"/>
    <property type="match status" value="1"/>
</dbReference>
<dbReference type="PANTHER" id="PTHR32057:SF14">
    <property type="entry name" value="PROTEIN ADENYLYLTRANSFERASE SELO, MITOCHONDRIAL"/>
    <property type="match status" value="1"/>
</dbReference>
<dbReference type="Pfam" id="PF02696">
    <property type="entry name" value="SelO"/>
    <property type="match status" value="1"/>
</dbReference>
<gene>
    <name evidence="1" type="primary">ydiU</name>
    <name evidence="1" type="synonym">selO</name>
    <name type="ordered locus">Shewmr4_3645</name>
</gene>
<comment type="function">
    <text evidence="1">Nucleotidyltransferase involved in the post-translational modification of proteins. It can catalyze the addition of adenosine monophosphate (AMP) or uridine monophosphate (UMP) to a protein, resulting in modifications known as AMPylation and UMPylation.</text>
</comment>
<comment type="catalytic activity">
    <reaction evidence="1">
        <text>L-seryl-[protein] + ATP = 3-O-(5'-adenylyl)-L-seryl-[protein] + diphosphate</text>
        <dbReference type="Rhea" id="RHEA:58120"/>
        <dbReference type="Rhea" id="RHEA-COMP:9863"/>
        <dbReference type="Rhea" id="RHEA-COMP:15073"/>
        <dbReference type="ChEBI" id="CHEBI:29999"/>
        <dbReference type="ChEBI" id="CHEBI:30616"/>
        <dbReference type="ChEBI" id="CHEBI:33019"/>
        <dbReference type="ChEBI" id="CHEBI:142516"/>
        <dbReference type="EC" id="2.7.7.108"/>
    </reaction>
</comment>
<comment type="catalytic activity">
    <reaction evidence="1">
        <text>L-threonyl-[protein] + ATP = 3-O-(5'-adenylyl)-L-threonyl-[protein] + diphosphate</text>
        <dbReference type="Rhea" id="RHEA:54292"/>
        <dbReference type="Rhea" id="RHEA-COMP:11060"/>
        <dbReference type="Rhea" id="RHEA-COMP:13847"/>
        <dbReference type="ChEBI" id="CHEBI:30013"/>
        <dbReference type="ChEBI" id="CHEBI:30616"/>
        <dbReference type="ChEBI" id="CHEBI:33019"/>
        <dbReference type="ChEBI" id="CHEBI:138113"/>
        <dbReference type="EC" id="2.7.7.108"/>
    </reaction>
</comment>
<comment type="catalytic activity">
    <reaction evidence="1">
        <text>L-tyrosyl-[protein] + ATP = O-(5'-adenylyl)-L-tyrosyl-[protein] + diphosphate</text>
        <dbReference type="Rhea" id="RHEA:54288"/>
        <dbReference type="Rhea" id="RHEA-COMP:10136"/>
        <dbReference type="Rhea" id="RHEA-COMP:13846"/>
        <dbReference type="ChEBI" id="CHEBI:30616"/>
        <dbReference type="ChEBI" id="CHEBI:33019"/>
        <dbReference type="ChEBI" id="CHEBI:46858"/>
        <dbReference type="ChEBI" id="CHEBI:83624"/>
        <dbReference type="EC" id="2.7.7.108"/>
    </reaction>
</comment>
<comment type="catalytic activity">
    <reaction evidence="1">
        <text>L-histidyl-[protein] + UTP = N(tele)-(5'-uridylyl)-L-histidyl-[protein] + diphosphate</text>
        <dbReference type="Rhea" id="RHEA:83891"/>
        <dbReference type="Rhea" id="RHEA-COMP:9745"/>
        <dbReference type="Rhea" id="RHEA-COMP:20239"/>
        <dbReference type="ChEBI" id="CHEBI:29979"/>
        <dbReference type="ChEBI" id="CHEBI:33019"/>
        <dbReference type="ChEBI" id="CHEBI:46398"/>
        <dbReference type="ChEBI" id="CHEBI:233474"/>
    </reaction>
</comment>
<comment type="catalytic activity">
    <reaction evidence="1">
        <text>L-seryl-[protein] + UTP = O-(5'-uridylyl)-L-seryl-[protein] + diphosphate</text>
        <dbReference type="Rhea" id="RHEA:64604"/>
        <dbReference type="Rhea" id="RHEA-COMP:9863"/>
        <dbReference type="Rhea" id="RHEA-COMP:16635"/>
        <dbReference type="ChEBI" id="CHEBI:29999"/>
        <dbReference type="ChEBI" id="CHEBI:33019"/>
        <dbReference type="ChEBI" id="CHEBI:46398"/>
        <dbReference type="ChEBI" id="CHEBI:156051"/>
    </reaction>
</comment>
<comment type="catalytic activity">
    <reaction evidence="1">
        <text>L-tyrosyl-[protein] + UTP = O-(5'-uridylyl)-L-tyrosyl-[protein] + diphosphate</text>
        <dbReference type="Rhea" id="RHEA:83887"/>
        <dbReference type="Rhea" id="RHEA-COMP:10136"/>
        <dbReference type="Rhea" id="RHEA-COMP:20238"/>
        <dbReference type="ChEBI" id="CHEBI:33019"/>
        <dbReference type="ChEBI" id="CHEBI:46398"/>
        <dbReference type="ChEBI" id="CHEBI:46858"/>
        <dbReference type="ChEBI" id="CHEBI:90602"/>
    </reaction>
</comment>
<comment type="cofactor">
    <cofactor evidence="1">
        <name>Mg(2+)</name>
        <dbReference type="ChEBI" id="CHEBI:18420"/>
    </cofactor>
    <cofactor evidence="1">
        <name>Mn(2+)</name>
        <dbReference type="ChEBI" id="CHEBI:29035"/>
    </cofactor>
</comment>
<comment type="similarity">
    <text evidence="1">Belongs to the SELO family.</text>
</comment>
<keyword id="KW-0067">ATP-binding</keyword>
<keyword id="KW-0460">Magnesium</keyword>
<keyword id="KW-0464">Manganese</keyword>
<keyword id="KW-0479">Metal-binding</keyword>
<keyword id="KW-0547">Nucleotide-binding</keyword>
<keyword id="KW-0548">Nucleotidyltransferase</keyword>
<keyword id="KW-0808">Transferase</keyword>
<accession>Q0HE08</accession>